<name>SCPB_BACAA</name>
<evidence type="ECO:0000255" key="1">
    <source>
        <dbReference type="HAMAP-Rule" id="MF_01804"/>
    </source>
</evidence>
<dbReference type="EMBL" id="CP001598">
    <property type="protein sequence ID" value="ACQ48239.1"/>
    <property type="molecule type" value="Genomic_DNA"/>
</dbReference>
<dbReference type="RefSeq" id="WP_000376225.1">
    <property type="nucleotide sequence ID" value="NC_012659.1"/>
</dbReference>
<dbReference type="SMR" id="C3P764"/>
<dbReference type="GeneID" id="45023946"/>
<dbReference type="KEGG" id="bai:BAA_4299"/>
<dbReference type="HOGENOM" id="CLU_045647_5_3_9"/>
<dbReference type="GO" id="GO:0005737">
    <property type="term" value="C:cytoplasm"/>
    <property type="evidence" value="ECO:0007669"/>
    <property type="project" value="UniProtKB-SubCell"/>
</dbReference>
<dbReference type="GO" id="GO:0051301">
    <property type="term" value="P:cell division"/>
    <property type="evidence" value="ECO:0007669"/>
    <property type="project" value="UniProtKB-KW"/>
</dbReference>
<dbReference type="GO" id="GO:0051304">
    <property type="term" value="P:chromosome separation"/>
    <property type="evidence" value="ECO:0007669"/>
    <property type="project" value="InterPro"/>
</dbReference>
<dbReference type="GO" id="GO:0006260">
    <property type="term" value="P:DNA replication"/>
    <property type="evidence" value="ECO:0007669"/>
    <property type="project" value="UniProtKB-UniRule"/>
</dbReference>
<dbReference type="Gene3D" id="1.10.10.10">
    <property type="entry name" value="Winged helix-like DNA-binding domain superfamily/Winged helix DNA-binding domain"/>
    <property type="match status" value="2"/>
</dbReference>
<dbReference type="HAMAP" id="MF_01804">
    <property type="entry name" value="ScpB"/>
    <property type="match status" value="1"/>
</dbReference>
<dbReference type="InterPro" id="IPR005234">
    <property type="entry name" value="ScpB_csome_segregation"/>
</dbReference>
<dbReference type="InterPro" id="IPR036388">
    <property type="entry name" value="WH-like_DNA-bd_sf"/>
</dbReference>
<dbReference type="InterPro" id="IPR036390">
    <property type="entry name" value="WH_DNA-bd_sf"/>
</dbReference>
<dbReference type="NCBIfam" id="TIGR00281">
    <property type="entry name" value="SMC-Scp complex subunit ScpB"/>
    <property type="match status" value="1"/>
</dbReference>
<dbReference type="PANTHER" id="PTHR34298">
    <property type="entry name" value="SEGREGATION AND CONDENSATION PROTEIN B"/>
    <property type="match status" value="1"/>
</dbReference>
<dbReference type="PANTHER" id="PTHR34298:SF2">
    <property type="entry name" value="SEGREGATION AND CONDENSATION PROTEIN B"/>
    <property type="match status" value="1"/>
</dbReference>
<dbReference type="Pfam" id="PF04079">
    <property type="entry name" value="SMC_ScpB"/>
    <property type="match status" value="1"/>
</dbReference>
<dbReference type="PIRSF" id="PIRSF019345">
    <property type="entry name" value="ScpB"/>
    <property type="match status" value="1"/>
</dbReference>
<dbReference type="SUPFAM" id="SSF46785">
    <property type="entry name" value="Winged helix' DNA-binding domain"/>
    <property type="match status" value="2"/>
</dbReference>
<comment type="function">
    <text evidence="1">Participates in chromosomal partition during cell division. May act via the formation of a condensin-like complex containing Smc and ScpA that pull DNA away from mid-cell into both cell halves.</text>
</comment>
<comment type="subunit">
    <text evidence="1">Homodimer. Homodimerization may be required to stabilize the binding of ScpA to the Smc head domains. Component of a cohesin-like complex composed of ScpA, ScpB and the Smc homodimer, in which ScpA and ScpB bind to the head domain of Smc. The presence of the three proteins is required for the association of the complex with DNA.</text>
</comment>
<comment type="subcellular location">
    <subcellularLocation>
        <location evidence="1">Cytoplasm</location>
    </subcellularLocation>
    <text evidence="1">Associated with two foci at the outer edges of the nucleoid region in young cells, and at four foci within both cell halves in older cells.</text>
</comment>
<comment type="similarity">
    <text evidence="1">Belongs to the ScpB family.</text>
</comment>
<reference key="1">
    <citation type="submission" date="2009-04" db="EMBL/GenBank/DDBJ databases">
        <title>Genome sequence of Bacillus anthracis A0248.</title>
        <authorList>
            <person name="Dodson R.J."/>
            <person name="Munk A.C."/>
            <person name="Bruce D."/>
            <person name="Detter C."/>
            <person name="Tapia R."/>
            <person name="Sutton G."/>
            <person name="Sims D."/>
            <person name="Brettin T."/>
        </authorList>
    </citation>
    <scope>NUCLEOTIDE SEQUENCE [LARGE SCALE GENOMIC DNA]</scope>
    <source>
        <strain>A0248</strain>
    </source>
</reference>
<protein>
    <recommendedName>
        <fullName evidence="1">Segregation and condensation protein B</fullName>
    </recommendedName>
</protein>
<feature type="chain" id="PRO_1000187524" description="Segregation and condensation protein B">
    <location>
        <begin position="1"/>
        <end position="190"/>
    </location>
</feature>
<accession>C3P764</accession>
<proteinExistence type="inferred from homology"/>
<organism>
    <name type="scientific">Bacillus anthracis (strain A0248)</name>
    <dbReference type="NCBI Taxonomy" id="592021"/>
    <lineage>
        <taxon>Bacteria</taxon>
        <taxon>Bacillati</taxon>
        <taxon>Bacillota</taxon>
        <taxon>Bacilli</taxon>
        <taxon>Bacillales</taxon>
        <taxon>Bacillaceae</taxon>
        <taxon>Bacillus</taxon>
        <taxon>Bacillus cereus group</taxon>
    </lineage>
</organism>
<gene>
    <name evidence="1" type="primary">scpB</name>
    <name type="ordered locus">BAA_4299</name>
</gene>
<sequence length="190" mass="21423">MDRTEQKSIIEGLLFVSGDEGIYPEQIAKVLEIEGNEVIDILEEMQKECEGAHRGLQIVQYAKVYRFATKKEHASYYQKLIEIPTAASLSQAALETLAIVAYRQPITRTEMEEIRGVKTDKALQTLVSHLLIKEMGRAEGPGRPILYGTTKEFLDTFGLKTLDDLPPLSEENEQMNEADLFFGSLQEISK</sequence>
<keyword id="KW-0131">Cell cycle</keyword>
<keyword id="KW-0132">Cell division</keyword>
<keyword id="KW-0159">Chromosome partition</keyword>
<keyword id="KW-0963">Cytoplasm</keyword>